<dbReference type="EMBL" id="CP000262">
    <property type="protein sequence ID" value="ABF38899.1"/>
    <property type="molecule type" value="Genomic_DNA"/>
</dbReference>
<dbReference type="SMR" id="Q1J462"/>
<dbReference type="KEGG" id="spi:MGAS10750_Spy1949"/>
<dbReference type="HOGENOM" id="CLU_092403_0_1_9"/>
<dbReference type="Proteomes" id="UP000002434">
    <property type="component" value="Chromosome"/>
</dbReference>
<dbReference type="GO" id="GO:0015935">
    <property type="term" value="C:small ribosomal subunit"/>
    <property type="evidence" value="ECO:0007669"/>
    <property type="project" value="InterPro"/>
</dbReference>
<dbReference type="GO" id="GO:0019843">
    <property type="term" value="F:rRNA binding"/>
    <property type="evidence" value="ECO:0007669"/>
    <property type="project" value="UniProtKB-UniRule"/>
</dbReference>
<dbReference type="GO" id="GO:0003735">
    <property type="term" value="F:structural constituent of ribosome"/>
    <property type="evidence" value="ECO:0007669"/>
    <property type="project" value="InterPro"/>
</dbReference>
<dbReference type="GO" id="GO:0042274">
    <property type="term" value="P:ribosomal small subunit biogenesis"/>
    <property type="evidence" value="ECO:0007669"/>
    <property type="project" value="TreeGrafter"/>
</dbReference>
<dbReference type="GO" id="GO:0006412">
    <property type="term" value="P:translation"/>
    <property type="evidence" value="ECO:0007669"/>
    <property type="project" value="UniProtKB-UniRule"/>
</dbReference>
<dbReference type="CDD" id="cd00165">
    <property type="entry name" value="S4"/>
    <property type="match status" value="1"/>
</dbReference>
<dbReference type="FunFam" id="1.10.1050.10:FF:000001">
    <property type="entry name" value="30S ribosomal protein S4"/>
    <property type="match status" value="1"/>
</dbReference>
<dbReference type="FunFam" id="3.10.290.10:FF:000001">
    <property type="entry name" value="30S ribosomal protein S4"/>
    <property type="match status" value="1"/>
</dbReference>
<dbReference type="Gene3D" id="1.10.1050.10">
    <property type="entry name" value="Ribosomal Protein S4 Delta 41, Chain A, domain 1"/>
    <property type="match status" value="1"/>
</dbReference>
<dbReference type="Gene3D" id="3.10.290.10">
    <property type="entry name" value="RNA-binding S4 domain"/>
    <property type="match status" value="1"/>
</dbReference>
<dbReference type="HAMAP" id="MF_01306_B">
    <property type="entry name" value="Ribosomal_uS4_B"/>
    <property type="match status" value="1"/>
</dbReference>
<dbReference type="InterPro" id="IPR022801">
    <property type="entry name" value="Ribosomal_uS4"/>
</dbReference>
<dbReference type="InterPro" id="IPR005709">
    <property type="entry name" value="Ribosomal_uS4_bac-type"/>
</dbReference>
<dbReference type="InterPro" id="IPR018079">
    <property type="entry name" value="Ribosomal_uS4_CS"/>
</dbReference>
<dbReference type="InterPro" id="IPR001912">
    <property type="entry name" value="Ribosomal_uS4_N"/>
</dbReference>
<dbReference type="InterPro" id="IPR002942">
    <property type="entry name" value="S4_RNA-bd"/>
</dbReference>
<dbReference type="InterPro" id="IPR036986">
    <property type="entry name" value="S4_RNA-bd_sf"/>
</dbReference>
<dbReference type="NCBIfam" id="NF003717">
    <property type="entry name" value="PRK05327.1"/>
    <property type="match status" value="1"/>
</dbReference>
<dbReference type="NCBIfam" id="TIGR01017">
    <property type="entry name" value="rpsD_bact"/>
    <property type="match status" value="1"/>
</dbReference>
<dbReference type="PANTHER" id="PTHR11831">
    <property type="entry name" value="30S 40S RIBOSOMAL PROTEIN"/>
    <property type="match status" value="1"/>
</dbReference>
<dbReference type="PANTHER" id="PTHR11831:SF4">
    <property type="entry name" value="SMALL RIBOSOMAL SUBUNIT PROTEIN US4M"/>
    <property type="match status" value="1"/>
</dbReference>
<dbReference type="Pfam" id="PF00163">
    <property type="entry name" value="Ribosomal_S4"/>
    <property type="match status" value="1"/>
</dbReference>
<dbReference type="Pfam" id="PF01479">
    <property type="entry name" value="S4"/>
    <property type="match status" value="1"/>
</dbReference>
<dbReference type="SMART" id="SM01390">
    <property type="entry name" value="Ribosomal_S4"/>
    <property type="match status" value="1"/>
</dbReference>
<dbReference type="SMART" id="SM00363">
    <property type="entry name" value="S4"/>
    <property type="match status" value="1"/>
</dbReference>
<dbReference type="SUPFAM" id="SSF55174">
    <property type="entry name" value="Alpha-L RNA-binding motif"/>
    <property type="match status" value="1"/>
</dbReference>
<dbReference type="PROSITE" id="PS00632">
    <property type="entry name" value="RIBOSOMAL_S4"/>
    <property type="match status" value="1"/>
</dbReference>
<dbReference type="PROSITE" id="PS50889">
    <property type="entry name" value="S4"/>
    <property type="match status" value="1"/>
</dbReference>
<sequence>MSRYTGPSWKQSRRLGLSLTGTGKELARRNYVPGQHGPNNRSKLSEYGLQLAEKQKLRFSYGLGEKQFRNLFVQATKIKEGTLGFNFMVLLERRLDNVVYRLGLATTRRQARQFVNHGHILVDGKRVDIPSYRVDPGQVISVREKSMKVPAILEAVEATLGRPAFVSFDAEKLEGALTRLPERDEINPEINEALVVEFYNKML</sequence>
<gene>
    <name evidence="1" type="primary">rpsD</name>
    <name type="ordered locus">MGAS10750_Spy1949</name>
</gene>
<protein>
    <recommendedName>
        <fullName evidence="1">Small ribosomal subunit protein uS4</fullName>
    </recommendedName>
    <alternativeName>
        <fullName evidence="2">30S ribosomal protein S4</fullName>
    </alternativeName>
</protein>
<organism>
    <name type="scientific">Streptococcus pyogenes serotype M4 (strain MGAS10750)</name>
    <dbReference type="NCBI Taxonomy" id="370554"/>
    <lineage>
        <taxon>Bacteria</taxon>
        <taxon>Bacillati</taxon>
        <taxon>Bacillota</taxon>
        <taxon>Bacilli</taxon>
        <taxon>Lactobacillales</taxon>
        <taxon>Streptococcaceae</taxon>
        <taxon>Streptococcus</taxon>
    </lineage>
</organism>
<reference key="1">
    <citation type="journal article" date="2006" name="Proc. Natl. Acad. Sci. U.S.A.">
        <title>Molecular genetic anatomy of inter- and intraserotype variation in the human bacterial pathogen group A Streptococcus.</title>
        <authorList>
            <person name="Beres S.B."/>
            <person name="Richter E.W."/>
            <person name="Nagiec M.J."/>
            <person name="Sumby P."/>
            <person name="Porcella S.F."/>
            <person name="DeLeo F.R."/>
            <person name="Musser J.M."/>
        </authorList>
    </citation>
    <scope>NUCLEOTIDE SEQUENCE [LARGE SCALE GENOMIC DNA]</scope>
    <source>
        <strain>MGAS10750</strain>
    </source>
</reference>
<name>RS4_STRPF</name>
<proteinExistence type="inferred from homology"/>
<keyword id="KW-0687">Ribonucleoprotein</keyword>
<keyword id="KW-0689">Ribosomal protein</keyword>
<keyword id="KW-0694">RNA-binding</keyword>
<keyword id="KW-0699">rRNA-binding</keyword>
<evidence type="ECO:0000255" key="1">
    <source>
        <dbReference type="HAMAP-Rule" id="MF_01306"/>
    </source>
</evidence>
<evidence type="ECO:0000305" key="2"/>
<accession>Q1J462</accession>
<comment type="function">
    <text evidence="1">One of the primary rRNA binding proteins, it binds directly to 16S rRNA where it nucleates assembly of the body of the 30S subunit.</text>
</comment>
<comment type="function">
    <text evidence="1">With S5 and S12 plays an important role in translational accuracy.</text>
</comment>
<comment type="subunit">
    <text evidence="1">Part of the 30S ribosomal subunit. Contacts protein S5. The interaction surface between S4 and S5 is involved in control of translational fidelity.</text>
</comment>
<comment type="similarity">
    <text evidence="1">Belongs to the universal ribosomal protein uS4 family.</text>
</comment>
<feature type="chain" id="PRO_0000293381" description="Small ribosomal subunit protein uS4">
    <location>
        <begin position="1"/>
        <end position="203"/>
    </location>
</feature>
<feature type="domain" description="S4 RNA-binding" evidence="1">
    <location>
        <begin position="93"/>
        <end position="156"/>
    </location>
</feature>